<accession>P9WKU3</accession>
<accession>L0T6V3</accession>
<accession>P64715</accession>
<accession>Q11162</accession>
<keyword id="KW-0007">Acetylation</keyword>
<keyword id="KW-1003">Cell membrane</keyword>
<keyword id="KW-0472">Membrane</keyword>
<keyword id="KW-1185">Reference proteome</keyword>
<keyword id="KW-0812">Transmembrane</keyword>
<keyword id="KW-1133">Transmembrane helix</keyword>
<name>Y497_MYCTU</name>
<gene>
    <name type="ordered locus">Rv0497</name>
    <name type="ORF">MTCY20G9.23</name>
</gene>
<feature type="initiator methionine" description="Removed" evidence="4">
    <location>
        <position position="1"/>
    </location>
</feature>
<feature type="chain" id="PRO_0000103699" description="Uncharacterized protein Rv0497">
    <location>
        <begin position="2"/>
        <end position="310"/>
    </location>
</feature>
<feature type="transmembrane region" description="Helical" evidence="1">
    <location>
        <begin position="231"/>
        <end position="251"/>
    </location>
</feature>
<feature type="transmembrane region" description="Helical" evidence="1">
    <location>
        <begin position="257"/>
        <end position="277"/>
    </location>
</feature>
<feature type="transmembrane region" description="Helical" evidence="1">
    <location>
        <begin position="286"/>
        <end position="306"/>
    </location>
</feature>
<feature type="region of interest" description="Disordered" evidence="2">
    <location>
        <begin position="22"/>
        <end position="163"/>
    </location>
</feature>
<feature type="region of interest" description="Disordered" evidence="2">
    <location>
        <begin position="178"/>
        <end position="209"/>
    </location>
</feature>
<feature type="compositionally biased region" description="Basic and acidic residues" evidence="2">
    <location>
        <begin position="56"/>
        <end position="66"/>
    </location>
</feature>
<feature type="compositionally biased region" description="Basic and acidic residues" evidence="2">
    <location>
        <begin position="183"/>
        <end position="197"/>
    </location>
</feature>
<feature type="compositionally biased region" description="Low complexity" evidence="2">
    <location>
        <begin position="198"/>
        <end position="209"/>
    </location>
</feature>
<feature type="modified residue" description="N-acetylthreonine" evidence="4">
    <location>
        <position position="2"/>
    </location>
</feature>
<reference key="1">
    <citation type="journal article" date="1998" name="Nature">
        <title>Deciphering the biology of Mycobacterium tuberculosis from the complete genome sequence.</title>
        <authorList>
            <person name="Cole S.T."/>
            <person name="Brosch R."/>
            <person name="Parkhill J."/>
            <person name="Garnier T."/>
            <person name="Churcher C.M."/>
            <person name="Harris D.E."/>
            <person name="Gordon S.V."/>
            <person name="Eiglmeier K."/>
            <person name="Gas S."/>
            <person name="Barry C.E. III"/>
            <person name="Tekaia F."/>
            <person name="Badcock K."/>
            <person name="Basham D."/>
            <person name="Brown D."/>
            <person name="Chillingworth T."/>
            <person name="Connor R."/>
            <person name="Davies R.M."/>
            <person name="Devlin K."/>
            <person name="Feltwell T."/>
            <person name="Gentles S."/>
            <person name="Hamlin N."/>
            <person name="Holroyd S."/>
            <person name="Hornsby T."/>
            <person name="Jagels K."/>
            <person name="Krogh A."/>
            <person name="McLean J."/>
            <person name="Moule S."/>
            <person name="Murphy L.D."/>
            <person name="Oliver S."/>
            <person name="Osborne J."/>
            <person name="Quail M.A."/>
            <person name="Rajandream M.A."/>
            <person name="Rogers J."/>
            <person name="Rutter S."/>
            <person name="Seeger K."/>
            <person name="Skelton S."/>
            <person name="Squares S."/>
            <person name="Squares R."/>
            <person name="Sulston J.E."/>
            <person name="Taylor K."/>
            <person name="Whitehead S."/>
            <person name="Barrell B.G."/>
        </authorList>
    </citation>
    <scope>NUCLEOTIDE SEQUENCE [LARGE SCALE GENOMIC DNA]</scope>
    <source>
        <strain>ATCC 25618 / H37Rv</strain>
    </source>
</reference>
<reference key="2">
    <citation type="journal article" date="2011" name="Mol. Cell. Proteomics">
        <title>Proteogenomic analysis of Mycobacterium tuberculosis by high resolution mass spectrometry.</title>
        <authorList>
            <person name="Kelkar D.S."/>
            <person name="Kumar D."/>
            <person name="Kumar P."/>
            <person name="Balakrishnan L."/>
            <person name="Muthusamy B."/>
            <person name="Yadav A.K."/>
            <person name="Shrivastava P."/>
            <person name="Marimuthu A."/>
            <person name="Anand S."/>
            <person name="Sundaram H."/>
            <person name="Kingsbury R."/>
            <person name="Harsha H.C."/>
            <person name="Nair B."/>
            <person name="Prasad T.S."/>
            <person name="Chauhan D.S."/>
            <person name="Katoch K."/>
            <person name="Katoch V.M."/>
            <person name="Kumar P."/>
            <person name="Chaerkady R."/>
            <person name="Ramachandran S."/>
            <person name="Dash D."/>
            <person name="Pandey A."/>
        </authorList>
    </citation>
    <scope>ACETYLATION [LARGE SCALE ANALYSIS] AT THR-2</scope>
    <scope>CLEAVAGE OF INITIATOR METHIONINE [LARGE SCALE ANALYSIS]</scope>
    <scope>IDENTIFICATION BY MASS SPECTROMETRY [LARGE SCALE ANALYSIS]</scope>
    <source>
        <strain>ATCC 25618 / H37Rv</strain>
    </source>
</reference>
<proteinExistence type="evidence at protein level"/>
<sequence length="310" mass="33092">MTGPHPETESSGNRQISVAELLARQGVTGAPARRRRRRRGDSDAITVAELTGEIPIIRDDHHHAGPDAHASQSPAANGRVQVGEAAPQSPAEPVAEQVAEEPTRTVYWSQPEPRWPKSPPQDRRESGPELSEYPRPLRHTHSDRAPAGPPSGAEHMSPDPVEHYPDLWVDVLDTEVGEAEAETEVREAQPGRGERHAAAAAAGTDVEGDGAAEARVARRALDVVPTLWRGALVVLQSILAVAFGAGLFIAFDQLWRWNSIVALVLSVMVILGLVVSVRAVRKTEDIASTLIAVAVGALITLGPLALLQSG</sequence>
<evidence type="ECO:0000255" key="1"/>
<evidence type="ECO:0000256" key="2">
    <source>
        <dbReference type="SAM" id="MobiDB-lite"/>
    </source>
</evidence>
<evidence type="ECO:0000305" key="3"/>
<evidence type="ECO:0007744" key="4">
    <source>
    </source>
</evidence>
<protein>
    <recommendedName>
        <fullName>Uncharacterized protein Rv0497</fullName>
    </recommendedName>
</protein>
<organism>
    <name type="scientific">Mycobacterium tuberculosis (strain ATCC 25618 / H37Rv)</name>
    <dbReference type="NCBI Taxonomy" id="83332"/>
    <lineage>
        <taxon>Bacteria</taxon>
        <taxon>Bacillati</taxon>
        <taxon>Actinomycetota</taxon>
        <taxon>Actinomycetes</taxon>
        <taxon>Mycobacteriales</taxon>
        <taxon>Mycobacteriaceae</taxon>
        <taxon>Mycobacterium</taxon>
        <taxon>Mycobacterium tuberculosis complex</taxon>
    </lineage>
</organism>
<comment type="subcellular location">
    <subcellularLocation>
        <location evidence="3">Cell membrane</location>
        <topology evidence="3">Multi-pass membrane protein</topology>
    </subcellularLocation>
</comment>
<comment type="similarity">
    <text evidence="3">To M.leprae ML2433.</text>
</comment>
<dbReference type="EMBL" id="AL123456">
    <property type="protein sequence ID" value="CCP43232.1"/>
    <property type="molecule type" value="Genomic_DNA"/>
</dbReference>
<dbReference type="PIR" id="D70745">
    <property type="entry name" value="D70745"/>
</dbReference>
<dbReference type="RefSeq" id="NP_215011.1">
    <property type="nucleotide sequence ID" value="NC_000962.3"/>
</dbReference>
<dbReference type="RefSeq" id="WP_003402426.1">
    <property type="nucleotide sequence ID" value="NZ_NVQJ01000002.1"/>
</dbReference>
<dbReference type="SMR" id="P9WKU3"/>
<dbReference type="STRING" id="83332.Rv0497"/>
<dbReference type="iPTMnet" id="P9WKU3"/>
<dbReference type="PaxDb" id="83332-Rv0497"/>
<dbReference type="DNASU" id="887240"/>
<dbReference type="GeneID" id="887240"/>
<dbReference type="KEGG" id="mtu:Rv0497"/>
<dbReference type="KEGG" id="mtv:RVBD_0497"/>
<dbReference type="TubercuList" id="Rv0497"/>
<dbReference type="eggNOG" id="ENOG50348T2">
    <property type="taxonomic scope" value="Bacteria"/>
</dbReference>
<dbReference type="InParanoid" id="P9WKU3"/>
<dbReference type="OrthoDB" id="4764613at2"/>
<dbReference type="Proteomes" id="UP000001584">
    <property type="component" value="Chromosome"/>
</dbReference>
<dbReference type="GO" id="GO:0009274">
    <property type="term" value="C:peptidoglycan-based cell wall"/>
    <property type="evidence" value="ECO:0007005"/>
    <property type="project" value="MTBBASE"/>
</dbReference>
<dbReference type="GO" id="GO:0005886">
    <property type="term" value="C:plasma membrane"/>
    <property type="evidence" value="ECO:0007669"/>
    <property type="project" value="UniProtKB-SubCell"/>
</dbReference>
<dbReference type="GO" id="GO:0051701">
    <property type="term" value="P:biological process involved in interaction with host"/>
    <property type="evidence" value="ECO:0000315"/>
    <property type="project" value="MTBBASE"/>
</dbReference>